<accession>A3N248</accession>
<comment type="function">
    <text evidence="1">One of the primary rRNA binding proteins, it binds directly to 16S rRNA where it nucleates assembly of the head domain of the 30S subunit. Is located at the subunit interface close to the decoding center, probably blocks exit of the E-site tRNA.</text>
</comment>
<comment type="subunit">
    <text evidence="1">Part of the 30S ribosomal subunit. Contacts proteins S9 and S11.</text>
</comment>
<comment type="similarity">
    <text evidence="1">Belongs to the universal ribosomal protein uS7 family.</text>
</comment>
<gene>
    <name evidence="1" type="primary">rpsG</name>
    <name type="ordered locus">APL_1400</name>
</gene>
<sequence>MPRRRSVEPRKILPDPKFGSELLAKFINVLMVDGKKSTAESIIYGALETLAQRTGKEALEAFEAALENVRPTVEVKSRRVGGSTYQVPVEVRPSRRNALAMRWIVEAARKRGDKSMALRLANELSDAADNKGTAVKKREDVHRMAEANKAFAHFRW</sequence>
<proteinExistence type="inferred from homology"/>
<name>RS7_ACTP2</name>
<organism>
    <name type="scientific">Actinobacillus pleuropneumoniae serotype 5b (strain L20)</name>
    <dbReference type="NCBI Taxonomy" id="416269"/>
    <lineage>
        <taxon>Bacteria</taxon>
        <taxon>Pseudomonadati</taxon>
        <taxon>Pseudomonadota</taxon>
        <taxon>Gammaproteobacteria</taxon>
        <taxon>Pasteurellales</taxon>
        <taxon>Pasteurellaceae</taxon>
        <taxon>Actinobacillus</taxon>
    </lineage>
</organism>
<keyword id="KW-1185">Reference proteome</keyword>
<keyword id="KW-0687">Ribonucleoprotein</keyword>
<keyword id="KW-0689">Ribosomal protein</keyword>
<keyword id="KW-0694">RNA-binding</keyword>
<keyword id="KW-0699">rRNA-binding</keyword>
<keyword id="KW-0820">tRNA-binding</keyword>
<feature type="chain" id="PRO_1000014137" description="Small ribosomal subunit protein uS7">
    <location>
        <begin position="1"/>
        <end position="156"/>
    </location>
</feature>
<dbReference type="EMBL" id="CP000569">
    <property type="protein sequence ID" value="ABN74484.1"/>
    <property type="molecule type" value="Genomic_DNA"/>
</dbReference>
<dbReference type="RefSeq" id="WP_005619841.1">
    <property type="nucleotide sequence ID" value="NC_009053.1"/>
</dbReference>
<dbReference type="SMR" id="A3N248"/>
<dbReference type="STRING" id="416269.APL_1400"/>
<dbReference type="EnsemblBacteria" id="ABN74484">
    <property type="protein sequence ID" value="ABN74484"/>
    <property type="gene ID" value="APL_1400"/>
</dbReference>
<dbReference type="GeneID" id="48599746"/>
<dbReference type="KEGG" id="apl:APL_1400"/>
<dbReference type="eggNOG" id="COG0049">
    <property type="taxonomic scope" value="Bacteria"/>
</dbReference>
<dbReference type="HOGENOM" id="CLU_072226_1_1_6"/>
<dbReference type="Proteomes" id="UP000001432">
    <property type="component" value="Chromosome"/>
</dbReference>
<dbReference type="GO" id="GO:0015935">
    <property type="term" value="C:small ribosomal subunit"/>
    <property type="evidence" value="ECO:0007669"/>
    <property type="project" value="InterPro"/>
</dbReference>
<dbReference type="GO" id="GO:0019843">
    <property type="term" value="F:rRNA binding"/>
    <property type="evidence" value="ECO:0007669"/>
    <property type="project" value="UniProtKB-UniRule"/>
</dbReference>
<dbReference type="GO" id="GO:0003735">
    <property type="term" value="F:structural constituent of ribosome"/>
    <property type="evidence" value="ECO:0007669"/>
    <property type="project" value="InterPro"/>
</dbReference>
<dbReference type="GO" id="GO:0000049">
    <property type="term" value="F:tRNA binding"/>
    <property type="evidence" value="ECO:0007669"/>
    <property type="project" value="UniProtKB-UniRule"/>
</dbReference>
<dbReference type="GO" id="GO:0006412">
    <property type="term" value="P:translation"/>
    <property type="evidence" value="ECO:0007669"/>
    <property type="project" value="UniProtKB-UniRule"/>
</dbReference>
<dbReference type="CDD" id="cd14869">
    <property type="entry name" value="uS7_Bacteria"/>
    <property type="match status" value="1"/>
</dbReference>
<dbReference type="FunFam" id="1.10.455.10:FF:000001">
    <property type="entry name" value="30S ribosomal protein S7"/>
    <property type="match status" value="1"/>
</dbReference>
<dbReference type="Gene3D" id="1.10.455.10">
    <property type="entry name" value="Ribosomal protein S7 domain"/>
    <property type="match status" value="1"/>
</dbReference>
<dbReference type="HAMAP" id="MF_00480_B">
    <property type="entry name" value="Ribosomal_uS7_B"/>
    <property type="match status" value="1"/>
</dbReference>
<dbReference type="InterPro" id="IPR000235">
    <property type="entry name" value="Ribosomal_uS7"/>
</dbReference>
<dbReference type="InterPro" id="IPR005717">
    <property type="entry name" value="Ribosomal_uS7_bac/org-type"/>
</dbReference>
<dbReference type="InterPro" id="IPR020606">
    <property type="entry name" value="Ribosomal_uS7_CS"/>
</dbReference>
<dbReference type="InterPro" id="IPR023798">
    <property type="entry name" value="Ribosomal_uS7_dom"/>
</dbReference>
<dbReference type="InterPro" id="IPR036823">
    <property type="entry name" value="Ribosomal_uS7_dom_sf"/>
</dbReference>
<dbReference type="NCBIfam" id="TIGR01029">
    <property type="entry name" value="rpsG_bact"/>
    <property type="match status" value="1"/>
</dbReference>
<dbReference type="PANTHER" id="PTHR11205">
    <property type="entry name" value="RIBOSOMAL PROTEIN S7"/>
    <property type="match status" value="1"/>
</dbReference>
<dbReference type="Pfam" id="PF00177">
    <property type="entry name" value="Ribosomal_S7"/>
    <property type="match status" value="1"/>
</dbReference>
<dbReference type="PIRSF" id="PIRSF002122">
    <property type="entry name" value="RPS7p_RPS7a_RPS5e_RPS7o"/>
    <property type="match status" value="1"/>
</dbReference>
<dbReference type="SUPFAM" id="SSF47973">
    <property type="entry name" value="Ribosomal protein S7"/>
    <property type="match status" value="1"/>
</dbReference>
<dbReference type="PROSITE" id="PS00052">
    <property type="entry name" value="RIBOSOMAL_S7"/>
    <property type="match status" value="1"/>
</dbReference>
<evidence type="ECO:0000255" key="1">
    <source>
        <dbReference type="HAMAP-Rule" id="MF_00480"/>
    </source>
</evidence>
<evidence type="ECO:0000305" key="2"/>
<reference key="1">
    <citation type="journal article" date="2008" name="J. Bacteriol.">
        <title>The complete genome sequence of Actinobacillus pleuropneumoniae L20 (serotype 5b).</title>
        <authorList>
            <person name="Foote S.J."/>
            <person name="Bosse J.T."/>
            <person name="Bouevitch A.B."/>
            <person name="Langford P.R."/>
            <person name="Young N.M."/>
            <person name="Nash J.H.E."/>
        </authorList>
    </citation>
    <scope>NUCLEOTIDE SEQUENCE [LARGE SCALE GENOMIC DNA]</scope>
    <source>
        <strain>L20</strain>
    </source>
</reference>
<protein>
    <recommendedName>
        <fullName evidence="1">Small ribosomal subunit protein uS7</fullName>
    </recommendedName>
    <alternativeName>
        <fullName evidence="2">30S ribosomal protein S7</fullName>
    </alternativeName>
</protein>